<accession>Q4WBQ3</accession>
<gene>
    <name evidence="4" type="primary">erg13A</name>
    <name type="ORF">AFUA_8G07210</name>
</gene>
<organism>
    <name type="scientific">Aspergillus fumigatus (strain ATCC MYA-4609 / CBS 101355 / FGSC A1100 / Af293)</name>
    <name type="common">Neosartorya fumigata</name>
    <dbReference type="NCBI Taxonomy" id="330879"/>
    <lineage>
        <taxon>Eukaryota</taxon>
        <taxon>Fungi</taxon>
        <taxon>Dikarya</taxon>
        <taxon>Ascomycota</taxon>
        <taxon>Pezizomycotina</taxon>
        <taxon>Eurotiomycetes</taxon>
        <taxon>Eurotiomycetidae</taxon>
        <taxon>Eurotiales</taxon>
        <taxon>Aspergillaceae</taxon>
        <taxon>Aspergillus</taxon>
        <taxon>Aspergillus subgen. Fumigati</taxon>
    </lineage>
</organism>
<protein>
    <recommendedName>
        <fullName evidence="4">Hydroxymethylglutaryl-CoA synthase erg13A</fullName>
        <shortName evidence="4">HMG-CoA synthase</shortName>
        <ecNumber evidence="1">2.3.3.10</ecNumber>
    </recommendedName>
    <alternativeName>
        <fullName evidence="4">3-hydroxy-3-methylglutaryl coenzyme A synthase erg13A</fullName>
    </alternativeName>
    <alternativeName>
        <fullName evidence="4">Ergosterol biosynthesis protein 13A</fullName>
    </alternativeName>
</protein>
<comment type="function">
    <text evidence="1 6 7">Hydroxymethylglutaryl-CoA synthase; part of the first module of ergosterol biosynthesis pathway that includes the early steps of the pathway, conserved across all eukaryotes, and which results in the formation of mevalonate from acetyl-coenzyme A (acetyl-CoA) (By similarity). Erg13A and erg13B condense acetyl-CoA with acetoacetyl-CoA to form hydroxymethylglutaryl-CoA (HMG-CoA) (By similarity). The first module starts with the action of the cytosolic acetyl-CoA acetyltransferase erg10B that catalyzes the formation of acetoacetyl-CoA. The hydroxymethylglutaryl-CoA synthases erg13A and erg13B then condense acetyl-CoA with acetoacetyl-CoA to form HMG-CoA. The rate-limiting step of the early module is the reduction to mevalonate by the 3-hydroxy-3-methylglutaryl-coenzyme A (HMG-CoA) reductases hmg1 and hmg2. Mevalonate is also a precursor for the extracellular siderophore triacetylfusarinine C (TAFC) (Probable) (PubMed:16110826, PubMed:22106303).</text>
</comment>
<comment type="catalytic activity">
    <reaction evidence="1 3">
        <text>acetoacetyl-CoA + acetyl-CoA + H2O = (3S)-3-hydroxy-3-methylglutaryl-CoA + CoA + H(+)</text>
        <dbReference type="Rhea" id="RHEA:10188"/>
        <dbReference type="ChEBI" id="CHEBI:15377"/>
        <dbReference type="ChEBI" id="CHEBI:15378"/>
        <dbReference type="ChEBI" id="CHEBI:43074"/>
        <dbReference type="ChEBI" id="CHEBI:57286"/>
        <dbReference type="ChEBI" id="CHEBI:57287"/>
        <dbReference type="ChEBI" id="CHEBI:57288"/>
        <dbReference type="EC" id="2.3.3.10"/>
    </reaction>
    <physiologicalReaction direction="left-to-right" evidence="1">
        <dbReference type="Rhea" id="RHEA:10189"/>
    </physiologicalReaction>
</comment>
<comment type="pathway">
    <text evidence="1">Metabolic intermediate biosynthesis; (R)-mevalonate biosynthesis; (R)-mevalonate from acetyl-CoA: step 2/3.</text>
</comment>
<comment type="similarity">
    <text evidence="5">Belongs to the thiolase-like superfamily. HMG-CoA synthase family.</text>
</comment>
<reference key="1">
    <citation type="journal article" date="2005" name="Nature">
        <title>Genomic sequence of the pathogenic and allergenic filamentous fungus Aspergillus fumigatus.</title>
        <authorList>
            <person name="Nierman W.C."/>
            <person name="Pain A."/>
            <person name="Anderson M.J."/>
            <person name="Wortman J.R."/>
            <person name="Kim H.S."/>
            <person name="Arroyo J."/>
            <person name="Berriman M."/>
            <person name="Abe K."/>
            <person name="Archer D.B."/>
            <person name="Bermejo C."/>
            <person name="Bennett J.W."/>
            <person name="Bowyer P."/>
            <person name="Chen D."/>
            <person name="Collins M."/>
            <person name="Coulsen R."/>
            <person name="Davies R."/>
            <person name="Dyer P.S."/>
            <person name="Farman M.L."/>
            <person name="Fedorova N."/>
            <person name="Fedorova N.D."/>
            <person name="Feldblyum T.V."/>
            <person name="Fischer R."/>
            <person name="Fosker N."/>
            <person name="Fraser A."/>
            <person name="Garcia J.L."/>
            <person name="Garcia M.J."/>
            <person name="Goble A."/>
            <person name="Goldman G.H."/>
            <person name="Gomi K."/>
            <person name="Griffith-Jones S."/>
            <person name="Gwilliam R."/>
            <person name="Haas B.J."/>
            <person name="Haas H."/>
            <person name="Harris D.E."/>
            <person name="Horiuchi H."/>
            <person name="Huang J."/>
            <person name="Humphray S."/>
            <person name="Jimenez J."/>
            <person name="Keller N."/>
            <person name="Khouri H."/>
            <person name="Kitamoto K."/>
            <person name="Kobayashi T."/>
            <person name="Konzack S."/>
            <person name="Kulkarni R."/>
            <person name="Kumagai T."/>
            <person name="Lafton A."/>
            <person name="Latge J.-P."/>
            <person name="Li W."/>
            <person name="Lord A."/>
            <person name="Lu C."/>
            <person name="Majoros W.H."/>
            <person name="May G.S."/>
            <person name="Miller B.L."/>
            <person name="Mohamoud Y."/>
            <person name="Molina M."/>
            <person name="Monod M."/>
            <person name="Mouyna I."/>
            <person name="Mulligan S."/>
            <person name="Murphy L.D."/>
            <person name="O'Neil S."/>
            <person name="Paulsen I."/>
            <person name="Penalva M.A."/>
            <person name="Pertea M."/>
            <person name="Price C."/>
            <person name="Pritchard B.L."/>
            <person name="Quail M.A."/>
            <person name="Rabbinowitsch E."/>
            <person name="Rawlins N."/>
            <person name="Rajandream M.A."/>
            <person name="Reichard U."/>
            <person name="Renauld H."/>
            <person name="Robson G.D."/>
            <person name="Rodriguez de Cordoba S."/>
            <person name="Rodriguez-Pena J.M."/>
            <person name="Ronning C.M."/>
            <person name="Rutter S."/>
            <person name="Salzberg S.L."/>
            <person name="Sanchez M."/>
            <person name="Sanchez-Ferrero J.C."/>
            <person name="Saunders D."/>
            <person name="Seeger K."/>
            <person name="Squares R."/>
            <person name="Squares S."/>
            <person name="Takeuchi M."/>
            <person name="Tekaia F."/>
            <person name="Turner G."/>
            <person name="Vazquez de Aldana C.R."/>
            <person name="Weidman J."/>
            <person name="White O."/>
            <person name="Woodward J.R."/>
            <person name="Yu J.-H."/>
            <person name="Fraser C.M."/>
            <person name="Galagan J.E."/>
            <person name="Asai K."/>
            <person name="Machida M."/>
            <person name="Hall N."/>
            <person name="Barrell B.G."/>
            <person name="Denning D.W."/>
        </authorList>
    </citation>
    <scope>NUCLEOTIDE SEQUENCE [LARGE SCALE GENOMIC DNA]</scope>
    <source>
        <strain>ATCC MYA-4609 / CBS 101355 / FGSC A1100 / Af293</strain>
    </source>
</reference>
<reference key="2">
    <citation type="journal article" date="2005" name="Med. Mycol.">
        <title>The ergosterol biosynthesis pathway, transporter genes, and azole resistance in Aspergillus fumigatus.</title>
        <authorList>
            <person name="Ferreira M.E."/>
            <person name="Colombo A.L."/>
            <person name="Paulsen I."/>
            <person name="Ren Q."/>
            <person name="Wortman J."/>
            <person name="Huang J."/>
            <person name="Goldman M.H."/>
            <person name="Goldman G.H."/>
        </authorList>
    </citation>
    <scope>IDENTIFICATION</scope>
    <scope>FUNCTION</scope>
</reference>
<reference key="3">
    <citation type="journal article" date="2012" name="Proc. Natl. Acad. Sci. U.S.A.">
        <title>Mevalonate governs interdependency of ergosterol and siderophore biosyntheses in the fungal pathogen Aspergillus fumigatus.</title>
        <authorList>
            <person name="Yasmin S."/>
            <person name="Alcazar-Fuoli L."/>
            <person name="Gruendlinger M."/>
            <person name="Puempel T."/>
            <person name="Cairns T."/>
            <person name="Blatzer M."/>
            <person name="Lopez J.F."/>
            <person name="Grimalt J.O."/>
            <person name="Bignell E."/>
            <person name="Haas H."/>
        </authorList>
    </citation>
    <scope>FUNCTION</scope>
</reference>
<evidence type="ECO:0000250" key="1">
    <source>
        <dbReference type="UniProtKB" id="P41338"/>
    </source>
</evidence>
<evidence type="ECO:0000250" key="2">
    <source>
        <dbReference type="UniProtKB" id="P54868"/>
    </source>
</evidence>
<evidence type="ECO:0000255" key="3">
    <source>
        <dbReference type="PROSITE-ProRule" id="PRU10116"/>
    </source>
</evidence>
<evidence type="ECO:0000303" key="4">
    <source>
    </source>
</evidence>
<evidence type="ECO:0000305" key="5"/>
<evidence type="ECO:0000305" key="6">
    <source>
    </source>
</evidence>
<evidence type="ECO:0000305" key="7">
    <source>
    </source>
</evidence>
<keyword id="KW-0012">Acyltransferase</keyword>
<keyword id="KW-0444">Lipid biosynthesis</keyword>
<keyword id="KW-0443">Lipid metabolism</keyword>
<keyword id="KW-1185">Reference proteome</keyword>
<keyword id="KW-0752">Steroid biosynthesis</keyword>
<keyword id="KW-0753">Steroid metabolism</keyword>
<keyword id="KW-0756">Sterol biosynthesis</keyword>
<keyword id="KW-1207">Sterol metabolism</keyword>
<keyword id="KW-0808">Transferase</keyword>
<feature type="chain" id="PRO_0000454148" description="Hydroxymethylglutaryl-CoA synthase erg13A">
    <location>
        <begin position="1"/>
        <end position="467"/>
    </location>
</feature>
<feature type="active site" description="Proton donor/acceptor" evidence="3">
    <location>
        <position position="86"/>
    </location>
</feature>
<feature type="active site" description="Acyl-thioester intermediate" evidence="3">
    <location>
        <position position="118"/>
    </location>
</feature>
<feature type="active site" description="Proton donor/acceptor" evidence="3">
    <location>
        <position position="259"/>
    </location>
</feature>
<feature type="binding site" evidence="2">
    <location>
        <position position="35"/>
    </location>
    <ligand>
        <name>(3S)-3-hydroxy-3-methylglutaryl-CoA</name>
        <dbReference type="ChEBI" id="CHEBI:43074"/>
    </ligand>
</feature>
<feature type="binding site" evidence="2">
    <location>
        <position position="118"/>
    </location>
    <ligand>
        <name>(3S)-3-hydroxy-3-methylglutaryl-CoA</name>
        <dbReference type="ChEBI" id="CHEBI:43074"/>
    </ligand>
</feature>
<feature type="binding site" evidence="2">
    <location>
        <position position="160"/>
    </location>
    <ligand>
        <name>(3S)-3-hydroxy-3-methylglutaryl-CoA</name>
        <dbReference type="ChEBI" id="CHEBI:43074"/>
    </ligand>
</feature>
<feature type="binding site" evidence="2">
    <location>
        <position position="209"/>
    </location>
    <ligand>
        <name>(3S)-3-hydroxy-3-methylglutaryl-CoA</name>
        <dbReference type="ChEBI" id="CHEBI:43074"/>
    </ligand>
</feature>
<feature type="binding site" evidence="2">
    <location>
        <position position="259"/>
    </location>
    <ligand>
        <name>(3S)-3-hydroxy-3-methylglutaryl-CoA</name>
        <dbReference type="ChEBI" id="CHEBI:43074"/>
    </ligand>
</feature>
<feature type="binding site" evidence="2">
    <location>
        <position position="268"/>
    </location>
    <ligand>
        <name>(3S)-3-hydroxy-3-methylglutaryl-CoA</name>
        <dbReference type="ChEBI" id="CHEBI:43074"/>
    </ligand>
</feature>
<feature type="binding site" evidence="2">
    <location>
        <position position="334"/>
    </location>
    <ligand>
        <name>(3S)-3-hydroxy-3-methylglutaryl-CoA</name>
        <dbReference type="ChEBI" id="CHEBI:43074"/>
    </ligand>
</feature>
<feature type="binding site" evidence="2">
    <location>
        <position position="368"/>
    </location>
    <ligand>
        <name>(3S)-3-hydroxy-3-methylglutaryl-CoA</name>
        <dbReference type="ChEBI" id="CHEBI:43074"/>
    </ligand>
</feature>
<sequence>MPSSAQNVGIKALEIYFPSRYVPQTELETFLGASAGKYTIGLGQQNMSFCDDREDLYSLALTAVSSLLRKYAIDPNTIGRLEVGTETLLDKAKSCKTVLMQLFGDNTDIEGVDTYNACYGGTNALFNAVNWIESSSWDGRDAIVVAGDIALYETPAARPTGGAGCVAMLIGPDAPLVLEPVRGSCMKHVYDFYKAYFKSEYPLVDGQFSNTCYLGALDACYQRYQAKQRARQAAKTNGTAISNGHQGSFLDTFDYFAFHAPNCKLVAKGYGRLLFNDFKLESGSFDEVPAQVREADFAASLTDKALEKLCVSLTKERFVQRVEPSLTAPTNCGNMYTASVYAGLISLISNVPSDRLQDKRIGMFSYGSGLASTLFSFRVKGDTTEMARKIGLQDRLSARTAVSPEFYDQMCKLREKAYQQRNYTPEGSVESLAPGTYFLVHVDDAYRRKYDMKPYLSMCEDRHEQAV</sequence>
<proteinExistence type="inferred from homology"/>
<name>ER13A_ASPFU</name>
<dbReference type="EC" id="2.3.3.10" evidence="1"/>
<dbReference type="EMBL" id="AAHF01000013">
    <property type="protein sequence ID" value="EAL85481.2"/>
    <property type="molecule type" value="Genomic_DNA"/>
</dbReference>
<dbReference type="RefSeq" id="XP_747519.2">
    <property type="nucleotide sequence ID" value="XM_742426.2"/>
</dbReference>
<dbReference type="SMR" id="Q4WBQ3"/>
<dbReference type="STRING" id="330879.Q4WBQ3"/>
<dbReference type="EnsemblFungi" id="EAL85481">
    <property type="protein sequence ID" value="EAL85481"/>
    <property type="gene ID" value="AFUA_8G07210"/>
</dbReference>
<dbReference type="GeneID" id="3504812"/>
<dbReference type="KEGG" id="afm:AFUA_8G07210"/>
<dbReference type="VEuPathDB" id="FungiDB:Afu8g07210"/>
<dbReference type="eggNOG" id="KOG1393">
    <property type="taxonomic scope" value="Eukaryota"/>
</dbReference>
<dbReference type="HOGENOM" id="CLU_008065_0_1_1"/>
<dbReference type="InParanoid" id="Q4WBQ3"/>
<dbReference type="OMA" id="ARNGNMY"/>
<dbReference type="OrthoDB" id="1269963at2759"/>
<dbReference type="UniPathway" id="UPA00058">
    <property type="reaction ID" value="UER00102"/>
</dbReference>
<dbReference type="Proteomes" id="UP000002530">
    <property type="component" value="Chromosome 8"/>
</dbReference>
<dbReference type="GO" id="GO:0004421">
    <property type="term" value="F:hydroxymethylglutaryl-CoA synthase activity"/>
    <property type="evidence" value="ECO:0000318"/>
    <property type="project" value="GO_Central"/>
</dbReference>
<dbReference type="GO" id="GO:0006084">
    <property type="term" value="P:acetyl-CoA metabolic process"/>
    <property type="evidence" value="ECO:0000318"/>
    <property type="project" value="GO_Central"/>
</dbReference>
<dbReference type="GO" id="GO:0006696">
    <property type="term" value="P:ergosterol biosynthetic process"/>
    <property type="evidence" value="ECO:0000318"/>
    <property type="project" value="GO_Central"/>
</dbReference>
<dbReference type="GO" id="GO:0010142">
    <property type="term" value="P:farnesyl diphosphate biosynthetic process, mevalonate pathway"/>
    <property type="evidence" value="ECO:0000318"/>
    <property type="project" value="GO_Central"/>
</dbReference>
<dbReference type="CDD" id="cd00827">
    <property type="entry name" value="init_cond_enzymes"/>
    <property type="match status" value="1"/>
</dbReference>
<dbReference type="FunFam" id="3.40.47.10:FF:000093">
    <property type="entry name" value="3-hydroxy-3-methylglutaryl coenzyme A synthase"/>
    <property type="match status" value="1"/>
</dbReference>
<dbReference type="Gene3D" id="3.40.47.10">
    <property type="match status" value="1"/>
</dbReference>
<dbReference type="InterPro" id="IPR000590">
    <property type="entry name" value="HMG_CoA_synt_AS"/>
</dbReference>
<dbReference type="InterPro" id="IPR013746">
    <property type="entry name" value="HMG_CoA_synt_C_dom"/>
</dbReference>
<dbReference type="InterPro" id="IPR013528">
    <property type="entry name" value="HMG_CoA_synth_N"/>
</dbReference>
<dbReference type="InterPro" id="IPR010122">
    <property type="entry name" value="HMG_CoA_synthase_euk"/>
</dbReference>
<dbReference type="InterPro" id="IPR016039">
    <property type="entry name" value="Thiolase-like"/>
</dbReference>
<dbReference type="NCBIfam" id="TIGR01833">
    <property type="entry name" value="HMG-CoA-S_euk"/>
    <property type="match status" value="1"/>
</dbReference>
<dbReference type="PANTHER" id="PTHR43323">
    <property type="entry name" value="3-HYDROXY-3-METHYLGLUTARYL COENZYME A SYNTHASE"/>
    <property type="match status" value="1"/>
</dbReference>
<dbReference type="PANTHER" id="PTHR43323:SF2">
    <property type="entry name" value="HYDROXYMETHYLGLUTARYL-COA SYNTHASE"/>
    <property type="match status" value="1"/>
</dbReference>
<dbReference type="Pfam" id="PF08540">
    <property type="entry name" value="HMG_CoA_synt_C"/>
    <property type="match status" value="1"/>
</dbReference>
<dbReference type="Pfam" id="PF01154">
    <property type="entry name" value="HMG_CoA_synt_N"/>
    <property type="match status" value="1"/>
</dbReference>
<dbReference type="SUPFAM" id="SSF53901">
    <property type="entry name" value="Thiolase-like"/>
    <property type="match status" value="2"/>
</dbReference>
<dbReference type="PROSITE" id="PS01226">
    <property type="entry name" value="HMG_COA_SYNTHASE"/>
    <property type="match status" value="1"/>
</dbReference>